<evidence type="ECO:0000269" key="1">
    <source>
    </source>
</evidence>
<evidence type="ECO:0000269" key="2">
    <source>
    </source>
</evidence>
<evidence type="ECO:0000269" key="3">
    <source>
    </source>
</evidence>
<evidence type="ECO:0000269" key="4">
    <source>
    </source>
</evidence>
<evidence type="ECO:0000269" key="5">
    <source>
    </source>
</evidence>
<evidence type="ECO:0000269" key="6">
    <source>
    </source>
</evidence>
<evidence type="ECO:0000269" key="7">
    <source>
    </source>
</evidence>
<evidence type="ECO:0000305" key="8"/>
<evidence type="ECO:0007744" key="9">
    <source>
        <dbReference type="PDB" id="1LYN"/>
    </source>
</evidence>
<evidence type="ECO:0007744" key="10">
    <source>
        <dbReference type="PDB" id="2LIS"/>
    </source>
</evidence>
<evidence type="ECO:0007744" key="11">
    <source>
        <dbReference type="PDB" id="2LYN"/>
    </source>
</evidence>
<evidence type="ECO:0007829" key="12">
    <source>
        <dbReference type="PDB" id="2LIS"/>
    </source>
</evidence>
<evidence type="ECO:0007829" key="13">
    <source>
        <dbReference type="PDB" id="5II8"/>
    </source>
</evidence>
<comment type="function">
    <text evidence="2 3 5 7">Creates a 3 um hole in the egg vitelline layer through which the sperm passes (PubMed:7106382). Does not have enzyme activity (PubMed:7106382). Species-specific interaction between the sperm protein lysin and the egg protein VERL exposes a basic surface on lysin that may dissociate the egg vitelline layer via electrostatic repulsion (PubMed:28622512, PubMed:7106382). Plays a role in ensuring species-specific fertilization (PubMed:2377618, PubMed:28622512, PubMed:9192632).</text>
</comment>
<comment type="subunit">
    <text evidence="1 3 6 7">Monomer (PubMed:10666624, PubMed:7657696). Homodimer (PubMed:10666624, PubMed:7657696). Molecules associate into dimers and then rapidly dissociate again (PubMed:10666624, PubMed:7657696). Interacts (as a monomer) with the egg vitelline layer protein VERL (via VERL repeats); each VERL chain can bind multiple copies of lysin (PubMed:28622512, PubMed:9192632).</text>
</comment>
<comment type="subcellular location">
    <subcellularLocation>
        <location evidence="5">Cytoplasmic vesicle</location>
        <location evidence="5">Secretory vesicle</location>
        <location evidence="5">Acrosome lumen</location>
    </subcellularLocation>
</comment>
<comment type="tissue specificity">
    <text evidence="2 4 5 7">Sperm (at protein level).</text>
</comment>
<protein>
    <recommendedName>
        <fullName>Egg-lysin</fullName>
    </recommendedName>
    <alternativeName>
        <fullName>Sperm-lysin</fullName>
    </alternativeName>
</protein>
<accession>P04552</accession>
<reference key="1">
    <citation type="journal article" date="1990" name="Proc. Natl. Acad. Sci. U.S.A.">
        <title>Species-specific sequences of abalone lysin, the sperm protein that creates a hole in the egg envelope.</title>
        <authorList>
            <person name="Vacquier V.D."/>
            <person name="Carner K.R."/>
            <person name="Stout C.D."/>
        </authorList>
    </citation>
    <scope>NUCLEOTIDE SEQUENCE [MRNA]</scope>
    <scope>FUNCTION</scope>
    <scope>TISSUE SPECIFICITY</scope>
</reference>
<reference key="2">
    <citation type="journal article" date="1985" name="J. Biol. Chem.">
        <title>Amino acid sequence of an egg-lysin protein from abalone spermatozoa that solubilizes the vitelline layer.</title>
        <authorList>
            <person name="Fridberger A."/>
            <person name="Sundelin J."/>
            <person name="Vacquier V.D."/>
            <person name="Peterson P.A."/>
        </authorList>
    </citation>
    <scope>PROTEIN SEQUENCE OF 19-152</scope>
    <scope>TISSUE SPECIFICITY</scope>
</reference>
<reference key="3">
    <citation type="journal article" date="1982" name="Dev. Biol.">
        <title>A protein from abalone sperm dissolves the egg vitelline layer by a nonenzymatic mechanism.</title>
        <authorList>
            <person name="Lewis C.A."/>
            <person name="Talbot C.F."/>
            <person name="Vacquier V.D."/>
        </authorList>
    </citation>
    <scope>FUNCTION</scope>
    <scope>SUBCELLULAR LOCATION</scope>
    <scope>TISSUE SPECIFICITY</scope>
</reference>
<reference key="4">
    <citation type="journal article" date="1997" name="Proc. Natl. Acad. Sci. U.S.A.">
        <title>The abalone egg vitelline envelope receptor for sperm lysin is a giant multivalent molecule.</title>
        <authorList>
            <person name="Swanson W.J."/>
            <person name="Vacquier V.D."/>
        </authorList>
    </citation>
    <scope>FUNCTION</scope>
    <scope>INTERACTION WITH VERL</scope>
    <scope>TISSUE SPECIFICITY</scope>
</reference>
<reference key="5">
    <citation type="journal article" date="1993" name="Science">
        <title>The crystal structure of lysin, a fertilization protein.</title>
        <authorList>
            <person name="Shaw A."/>
            <person name="McRee D.E."/>
            <person name="Vacquier V.D."/>
            <person name="Stout C.D."/>
        </authorList>
    </citation>
    <scope>X-RAY CRYSTALLOGRAPHY (1.90 ANGSTROMS) OF 19-154</scope>
</reference>
<reference evidence="9" key="6">
    <citation type="journal article" date="1995" name="J. Cell Biol.">
        <title>Crystal structure and subunit dynamics of the abalone sperm lysin dimer: egg envelopes dissociate dimers, the monomer is the active species.</title>
        <authorList>
            <person name="Shaw A."/>
            <person name="Fortes P.A."/>
            <person name="Stout C.D."/>
            <person name="Vacquier V.D."/>
        </authorList>
    </citation>
    <scope>X-RAY CRYSTALLOGRAPHY (2.75 ANGSTROMS) OF 19-154</scope>
    <scope>SUBUNIT</scope>
</reference>
<reference evidence="10 11" key="7">
    <citation type="journal article" date="2000" name="Acta Crystallogr. D">
        <title>1.35 and 2.07 A resolution structures of the red abalone sperm lysin monomer and dimer reveal features involved in receptor binding.</title>
        <authorList>
            <person name="Kresge N."/>
            <person name="Vacquier V.D."/>
            <person name="Stout C.D."/>
        </authorList>
    </citation>
    <scope>X-RAY CRYSTALLOGRAPHY (1.35 ANGSTROMS) OF 19-154</scope>
    <scope>SUBUNIT</scope>
</reference>
<reference key="8">
    <citation type="journal article" date="2017" name="Cell">
        <title>Structural basis of egg coat-sperm recognition at fertilization.</title>
        <authorList>
            <person name="Raj I."/>
            <person name="Sadat Al Hosseini H."/>
            <person name="Dioguardi E."/>
            <person name="Nishimura K."/>
            <person name="Han L."/>
            <person name="Villa A."/>
            <person name="de Sanctis D."/>
            <person name="Jovine L."/>
        </authorList>
    </citation>
    <scope>X-RAY CRYSTALLOGRAPHY (1.64 ANGSTROMS) OF 19-154 IN COMPLEXES WITH VERL</scope>
    <scope>FUNCTION</scope>
    <scope>SUBUNIT</scope>
    <scope>MUTAGENESIS OF 78-THR-HIS-79; PHE-119; LYS-150 AND TYR-151</scope>
</reference>
<feature type="signal peptide" evidence="4">
    <location>
        <begin position="1"/>
        <end position="18"/>
    </location>
</feature>
<feature type="chain" id="PRO_0000021170" description="Egg-lysin">
    <location>
        <begin position="19"/>
        <end position="154"/>
    </location>
</feature>
<feature type="mutagenesis site" description="Nearly abolishes VERL binding." evidence="3">
    <original>TH</original>
    <variation>AA</variation>
    <location>
        <begin position="78"/>
        <end position="79"/>
    </location>
</feature>
<feature type="mutagenesis site" description="Impaired VERL binding." evidence="3">
    <original>F</original>
    <variation>S</variation>
    <location>
        <position position="119"/>
    </location>
</feature>
<feature type="mutagenesis site" description="No effect on VERL binding. Impairs VERL binding; when associated with N-151." evidence="3">
    <original>K</original>
    <variation>A</variation>
    <location>
        <position position="150"/>
    </location>
</feature>
<feature type="mutagenesis site" description="Impairs VERL binding; when associated with A-150." evidence="3">
    <original>Y</original>
    <variation>N</variation>
    <location>
        <position position="151"/>
    </location>
</feature>
<feature type="sequence conflict" description="In Ref. 2; AA sequence." evidence="8" ref="2">
    <original>VQI</original>
    <variation>KQF</variation>
    <location>
        <begin position="39"/>
        <end position="41"/>
    </location>
</feature>
<feature type="sequence conflict" description="In Ref. 2; AA sequence." evidence="8" ref="2">
    <original>L</original>
    <variation>I</variation>
    <location>
        <position position="85"/>
    </location>
</feature>
<feature type="sequence conflict" description="In Ref. 2; AA sequence." evidence="8" ref="2">
    <original>I</original>
    <variation>L</variation>
    <location>
        <position position="91"/>
    </location>
</feature>
<feature type="sequence conflict" description="In Ref. 2; AA sequence." evidence="8" ref="2">
    <original>E</original>
    <variation>D</variation>
    <location>
        <position position="109"/>
    </location>
</feature>
<feature type="sequence conflict" description="In Ref. 2; AA sequence." evidence="8" ref="2">
    <original>E</original>
    <variation>Q</variation>
    <location>
        <position position="137"/>
    </location>
</feature>
<feature type="helix" evidence="13">
    <location>
        <begin position="31"/>
        <end position="56"/>
    </location>
</feature>
<feature type="helix" evidence="13">
    <location>
        <begin position="57"/>
        <end position="59"/>
    </location>
</feature>
<feature type="helix" evidence="13">
    <location>
        <begin position="62"/>
        <end position="92"/>
    </location>
</feature>
<feature type="strand" evidence="12">
    <location>
        <begin position="94"/>
        <end position="96"/>
    </location>
</feature>
<feature type="helix" evidence="13">
    <location>
        <begin position="100"/>
        <end position="113"/>
    </location>
</feature>
<feature type="helix" evidence="13">
    <location>
        <begin position="117"/>
        <end position="125"/>
    </location>
</feature>
<feature type="helix" evidence="13">
    <location>
        <begin position="134"/>
        <end position="141"/>
    </location>
</feature>
<feature type="helix" evidence="13">
    <location>
        <begin position="144"/>
        <end position="146"/>
    </location>
</feature>
<proteinExistence type="evidence at protein level"/>
<name>ELYS_HALRU</name>
<organism>
    <name type="scientific">Haliotis rufescens</name>
    <name type="common">California red abalone</name>
    <dbReference type="NCBI Taxonomy" id="6454"/>
    <lineage>
        <taxon>Eukaryota</taxon>
        <taxon>Metazoa</taxon>
        <taxon>Spiralia</taxon>
        <taxon>Lophotrochozoa</taxon>
        <taxon>Mollusca</taxon>
        <taxon>Gastropoda</taxon>
        <taxon>Vetigastropoda</taxon>
        <taxon>Lepetellida</taxon>
        <taxon>Haliotoidea</taxon>
        <taxon>Haliotidae</taxon>
        <taxon>Haliotis</taxon>
    </lineage>
</organism>
<keyword id="KW-0002">3D-structure</keyword>
<keyword id="KW-0968">Cytoplasmic vesicle</keyword>
<keyword id="KW-0903">Direct protein sequencing</keyword>
<keyword id="KW-0278">Fertilization</keyword>
<keyword id="KW-0732">Signal</keyword>
<sequence length="154" mass="18237">MKLLVLCIFAMMATLAMSRSWHYVEPKFLNKAFEVALKVQIIAGFDRGLVKWLRVHGRTLSTVQKKALYFVNRRYMQTHWANYMLWINKKIDALGRTPVVGDYTRLGAEIGRRIDMAYFYDFLKDKNMIPKYLPYMEEINRMRPADVPVKYMGK</sequence>
<dbReference type="EMBL" id="M34388">
    <property type="protein sequence ID" value="AAA29196.1"/>
    <property type="molecule type" value="mRNA"/>
</dbReference>
<dbReference type="PIR" id="A35960">
    <property type="entry name" value="EYNKHR"/>
</dbReference>
<dbReference type="RefSeq" id="XP_046356651.1">
    <property type="nucleotide sequence ID" value="XM_046500695.1"/>
</dbReference>
<dbReference type="PDB" id="1LIS">
    <property type="method" value="X-ray"/>
    <property type="resolution" value="1.90 A"/>
    <property type="chains" value="A=19-154"/>
</dbReference>
<dbReference type="PDB" id="1LYN">
    <property type="method" value="X-ray"/>
    <property type="resolution" value="2.75 A"/>
    <property type="chains" value="A/B=19-154"/>
</dbReference>
<dbReference type="PDB" id="2LIS">
    <property type="method" value="X-ray"/>
    <property type="resolution" value="1.35 A"/>
    <property type="chains" value="A=19-154"/>
</dbReference>
<dbReference type="PDB" id="2LYN">
    <property type="method" value="X-ray"/>
    <property type="resolution" value="2.07 A"/>
    <property type="chains" value="A/B/C/D=19-154"/>
</dbReference>
<dbReference type="PDB" id="5II7">
    <property type="method" value="X-ray"/>
    <property type="resolution" value="1.66 A"/>
    <property type="chains" value="A=19-154"/>
</dbReference>
<dbReference type="PDB" id="5II8">
    <property type="method" value="X-ray"/>
    <property type="resolution" value="0.99 A"/>
    <property type="chains" value="A=19-154"/>
</dbReference>
<dbReference type="PDB" id="5II9">
    <property type="method" value="X-ray"/>
    <property type="resolution" value="2.11 A"/>
    <property type="chains" value="A/B/C/D/E/F=19-154"/>
</dbReference>
<dbReference type="PDB" id="5IIA">
    <property type="method" value="X-ray"/>
    <property type="resolution" value="1.70 A"/>
    <property type="chains" value="A/C/E/G=19-154"/>
</dbReference>
<dbReference type="PDB" id="5IIB">
    <property type="method" value="X-ray"/>
    <property type="resolution" value="1.64 A"/>
    <property type="chains" value="A=19-154"/>
</dbReference>
<dbReference type="PDB" id="5MR3">
    <property type="method" value="X-ray"/>
    <property type="resolution" value="1.80 A"/>
    <property type="chains" value="A/C/E/G=19-154"/>
</dbReference>
<dbReference type="PDB" id="5UTG">
    <property type="method" value="NMR"/>
    <property type="chains" value="A=19-152"/>
</dbReference>
<dbReference type="PDBsum" id="1LIS"/>
<dbReference type="PDBsum" id="1LYN"/>
<dbReference type="PDBsum" id="2LIS"/>
<dbReference type="PDBsum" id="2LYN"/>
<dbReference type="PDBsum" id="5II7"/>
<dbReference type="PDBsum" id="5II8"/>
<dbReference type="PDBsum" id="5II9"/>
<dbReference type="PDBsum" id="5IIA"/>
<dbReference type="PDBsum" id="5IIB"/>
<dbReference type="PDBsum" id="5MR3"/>
<dbReference type="PDBsum" id="5UTG"/>
<dbReference type="BMRB" id="P04552"/>
<dbReference type="SMR" id="P04552"/>
<dbReference type="EnsemblMetazoa" id="XM_046500695.1">
    <property type="protein sequence ID" value="XP_046356651.1"/>
    <property type="gene ID" value="LOC124135380"/>
</dbReference>
<dbReference type="GeneID" id="124135380"/>
<dbReference type="OrthoDB" id="10328913at2759"/>
<dbReference type="EvolutionaryTrace" id="P04552"/>
<dbReference type="GO" id="GO:0043160">
    <property type="term" value="C:acrosomal lumen"/>
    <property type="evidence" value="ECO:0000314"/>
    <property type="project" value="UniProtKB"/>
</dbReference>
<dbReference type="GO" id="GO:0007338">
    <property type="term" value="P:single fertilization"/>
    <property type="evidence" value="ECO:0000314"/>
    <property type="project" value="UniProtKB"/>
</dbReference>
<dbReference type="CDD" id="cd00243">
    <property type="entry name" value="Lysin-Sp18"/>
    <property type="match status" value="1"/>
</dbReference>
<dbReference type="FunFam" id="1.20.150.10:FF:000001">
    <property type="entry name" value="Egg-lysin"/>
    <property type="match status" value="1"/>
</dbReference>
<dbReference type="Gene3D" id="1.20.150.10">
    <property type="entry name" value="Fertilization protein"/>
    <property type="match status" value="1"/>
</dbReference>
<dbReference type="InterPro" id="IPR001379">
    <property type="entry name" value="Egg_lysin"/>
</dbReference>
<dbReference type="InterPro" id="IPR035916">
    <property type="entry name" value="Egg_lysin_sf"/>
</dbReference>
<dbReference type="Pfam" id="PF01303">
    <property type="entry name" value="Egg_lysin"/>
    <property type="match status" value="1"/>
</dbReference>
<dbReference type="PRINTS" id="PR01882">
    <property type="entry name" value="LYSIN"/>
</dbReference>
<dbReference type="SUPFAM" id="SSF47082">
    <property type="entry name" value="Fertilization protein"/>
    <property type="match status" value="1"/>
</dbReference>